<proteinExistence type="evidence at protein level"/>
<keyword id="KW-0002">3D-structure</keyword>
<keyword id="KW-1185">Reference proteome</keyword>
<keyword id="KW-0687">Ribonucleoprotein</keyword>
<keyword id="KW-0689">Ribosomal protein</keyword>
<accession>P75131</accession>
<comment type="similarity">
    <text evidence="1">Belongs to the bacterial ribosomal protein bS16 family.</text>
</comment>
<evidence type="ECO:0000255" key="1">
    <source>
        <dbReference type="HAMAP-Rule" id="MF_00385"/>
    </source>
</evidence>
<evidence type="ECO:0000305" key="2"/>
<reference key="1">
    <citation type="journal article" date="1996" name="Nucleic Acids Res.">
        <title>Complete sequence analysis of the genome of the bacterium Mycoplasma pneumoniae.</title>
        <authorList>
            <person name="Himmelreich R."/>
            <person name="Hilbert H."/>
            <person name="Plagens H."/>
            <person name="Pirkl E."/>
            <person name="Li B.-C."/>
            <person name="Herrmann R."/>
        </authorList>
    </citation>
    <scope>NUCLEOTIDE SEQUENCE [LARGE SCALE GENOMIC DNA]</scope>
    <source>
        <strain>ATCC 29342 / M129 / Subtype 1</strain>
    </source>
</reference>
<sequence>MRMGRVHYPTYRIVAVDSRVKRDGKYIALIGHLNPALKENKCKIDEAVALEWLNKGAKPTDTVRSLFSQTGLWKKFVESKKKPVAKSK</sequence>
<gene>
    <name evidence="1" type="primary">rpsP</name>
    <name type="ordered locus">MPN_660</name>
    <name type="ORF">MP182</name>
</gene>
<organism>
    <name type="scientific">Mycoplasma pneumoniae (strain ATCC 29342 / M129 / Subtype 1)</name>
    <name type="common">Mycoplasmoides pneumoniae</name>
    <dbReference type="NCBI Taxonomy" id="272634"/>
    <lineage>
        <taxon>Bacteria</taxon>
        <taxon>Bacillati</taxon>
        <taxon>Mycoplasmatota</taxon>
        <taxon>Mycoplasmoidales</taxon>
        <taxon>Mycoplasmoidaceae</taxon>
        <taxon>Mycoplasmoides</taxon>
    </lineage>
</organism>
<feature type="chain" id="PRO_0000167211" description="Small ribosomal subunit protein bS16">
    <location>
        <begin position="1"/>
        <end position="88"/>
    </location>
</feature>
<name>RS16_MYCPN</name>
<protein>
    <recommendedName>
        <fullName evidence="1">Small ribosomal subunit protein bS16</fullName>
    </recommendedName>
    <alternativeName>
        <fullName evidence="2">30S ribosomal protein S16</fullName>
    </alternativeName>
</protein>
<dbReference type="EMBL" id="U00089">
    <property type="protein sequence ID" value="AAB95830.1"/>
    <property type="molecule type" value="Genomic_DNA"/>
</dbReference>
<dbReference type="PIR" id="S73508">
    <property type="entry name" value="S73508"/>
</dbReference>
<dbReference type="PDB" id="7OOC">
    <property type="method" value="EM"/>
    <property type="resolution" value="3.70 A"/>
    <property type="chains" value="O=1-88"/>
</dbReference>
<dbReference type="PDB" id="7P6Z">
    <property type="method" value="EM"/>
    <property type="resolution" value="3.50 A"/>
    <property type="chains" value="O=1-88"/>
</dbReference>
<dbReference type="PDB" id="7PAH">
    <property type="method" value="EM"/>
    <property type="resolution" value="9.50 A"/>
    <property type="chains" value="O=1-88"/>
</dbReference>
<dbReference type="PDB" id="7PAI">
    <property type="method" value="EM"/>
    <property type="resolution" value="6.70 A"/>
    <property type="chains" value="O=1-88"/>
</dbReference>
<dbReference type="PDB" id="7PAJ">
    <property type="method" value="EM"/>
    <property type="resolution" value="7.30 A"/>
    <property type="chains" value="O=1-88"/>
</dbReference>
<dbReference type="PDB" id="7PAK">
    <property type="method" value="EM"/>
    <property type="resolution" value="5.30 A"/>
    <property type="chains" value="O=1-88"/>
</dbReference>
<dbReference type="PDB" id="7PAL">
    <property type="method" value="EM"/>
    <property type="resolution" value="4.70 A"/>
    <property type="chains" value="O=1-88"/>
</dbReference>
<dbReference type="PDB" id="7PAM">
    <property type="method" value="EM"/>
    <property type="resolution" value="6.80 A"/>
    <property type="chains" value="O=1-88"/>
</dbReference>
<dbReference type="PDB" id="7PAN">
    <property type="method" value="EM"/>
    <property type="resolution" value="9.70 A"/>
    <property type="chains" value="O=1-88"/>
</dbReference>
<dbReference type="PDB" id="7PAO">
    <property type="method" value="EM"/>
    <property type="resolution" value="7.00 A"/>
    <property type="chains" value="O=1-88"/>
</dbReference>
<dbReference type="PDB" id="7PAQ">
    <property type="method" value="EM"/>
    <property type="resolution" value="8.90 A"/>
    <property type="chains" value="O=1-88"/>
</dbReference>
<dbReference type="PDB" id="7PAR">
    <property type="method" value="EM"/>
    <property type="resolution" value="8.20 A"/>
    <property type="chains" value="O=1-88"/>
</dbReference>
<dbReference type="PDB" id="7PAS">
    <property type="method" value="EM"/>
    <property type="resolution" value="16.00 A"/>
    <property type="chains" value="O=1-88"/>
</dbReference>
<dbReference type="PDB" id="7PH9">
    <property type="method" value="EM"/>
    <property type="resolution" value="8.70 A"/>
    <property type="chains" value="O=1-88"/>
</dbReference>
<dbReference type="PDB" id="7PHA">
    <property type="method" value="EM"/>
    <property type="resolution" value="8.50 A"/>
    <property type="chains" value="O=1-88"/>
</dbReference>
<dbReference type="PDB" id="7PHB">
    <property type="method" value="EM"/>
    <property type="resolution" value="4.90 A"/>
    <property type="chains" value="O=1-88"/>
</dbReference>
<dbReference type="PDB" id="7PHC">
    <property type="method" value="EM"/>
    <property type="resolution" value="9.90 A"/>
    <property type="chains" value="O=1-88"/>
</dbReference>
<dbReference type="PDB" id="7PI8">
    <property type="method" value="EM"/>
    <property type="resolution" value="8.90 A"/>
    <property type="chains" value="O=1-88"/>
</dbReference>
<dbReference type="PDB" id="7PI9">
    <property type="method" value="EM"/>
    <property type="resolution" value="6.30 A"/>
    <property type="chains" value="O=1-88"/>
</dbReference>
<dbReference type="PDB" id="7PIA">
    <property type="method" value="EM"/>
    <property type="resolution" value="13.60 A"/>
    <property type="chains" value="O=1-88"/>
</dbReference>
<dbReference type="PDB" id="7PIB">
    <property type="method" value="EM"/>
    <property type="resolution" value="4.70 A"/>
    <property type="chains" value="O=1-88"/>
</dbReference>
<dbReference type="PDB" id="7PIC">
    <property type="method" value="EM"/>
    <property type="resolution" value="9.10 A"/>
    <property type="chains" value="O=1-88"/>
</dbReference>
<dbReference type="PDB" id="7PIO">
    <property type="method" value="EM"/>
    <property type="resolution" value="9.50 A"/>
    <property type="chains" value="O=1-88"/>
</dbReference>
<dbReference type="PDB" id="7PIP">
    <property type="method" value="EM"/>
    <property type="resolution" value="9.30 A"/>
    <property type="chains" value="O=1-88"/>
</dbReference>
<dbReference type="PDB" id="7PIQ">
    <property type="method" value="EM"/>
    <property type="resolution" value="9.70 A"/>
    <property type="chains" value="O=1-88"/>
</dbReference>
<dbReference type="PDB" id="7PIR">
    <property type="method" value="EM"/>
    <property type="resolution" value="12.10 A"/>
    <property type="chains" value="O=1-88"/>
</dbReference>
<dbReference type="PDB" id="7PIS">
    <property type="method" value="EM"/>
    <property type="resolution" value="15.00 A"/>
    <property type="chains" value="O=1-88"/>
</dbReference>
<dbReference type="PDB" id="7PIT">
    <property type="method" value="EM"/>
    <property type="resolution" value="5.70 A"/>
    <property type="chains" value="O=1-88"/>
</dbReference>
<dbReference type="PDBsum" id="7OOC"/>
<dbReference type="PDBsum" id="7P6Z"/>
<dbReference type="PDBsum" id="7PAH"/>
<dbReference type="PDBsum" id="7PAI"/>
<dbReference type="PDBsum" id="7PAJ"/>
<dbReference type="PDBsum" id="7PAK"/>
<dbReference type="PDBsum" id="7PAL"/>
<dbReference type="PDBsum" id="7PAM"/>
<dbReference type="PDBsum" id="7PAN"/>
<dbReference type="PDBsum" id="7PAO"/>
<dbReference type="PDBsum" id="7PAQ"/>
<dbReference type="PDBsum" id="7PAR"/>
<dbReference type="PDBsum" id="7PAS"/>
<dbReference type="PDBsum" id="7PH9"/>
<dbReference type="PDBsum" id="7PHA"/>
<dbReference type="PDBsum" id="7PHB"/>
<dbReference type="PDBsum" id="7PHC"/>
<dbReference type="PDBsum" id="7PI8"/>
<dbReference type="PDBsum" id="7PI9"/>
<dbReference type="PDBsum" id="7PIA"/>
<dbReference type="PDBsum" id="7PIB"/>
<dbReference type="PDBsum" id="7PIC"/>
<dbReference type="PDBsum" id="7PIO"/>
<dbReference type="PDBsum" id="7PIP"/>
<dbReference type="PDBsum" id="7PIQ"/>
<dbReference type="PDBsum" id="7PIR"/>
<dbReference type="PDBsum" id="7PIS"/>
<dbReference type="PDBsum" id="7PIT"/>
<dbReference type="SMR" id="P75131"/>
<dbReference type="IntAct" id="P75131">
    <property type="interactions" value="2"/>
</dbReference>
<dbReference type="STRING" id="272634.MPN_660"/>
<dbReference type="EnsemblBacteria" id="AAB95830">
    <property type="protein sequence ID" value="AAB95830"/>
    <property type="gene ID" value="MPN_660"/>
</dbReference>
<dbReference type="KEGG" id="mpn:MPN_660"/>
<dbReference type="HOGENOM" id="CLU_100590_5_0_14"/>
<dbReference type="Proteomes" id="UP000000808">
    <property type="component" value="Chromosome"/>
</dbReference>
<dbReference type="GO" id="GO:0005737">
    <property type="term" value="C:cytoplasm"/>
    <property type="evidence" value="ECO:0007669"/>
    <property type="project" value="UniProtKB-ARBA"/>
</dbReference>
<dbReference type="GO" id="GO:0015935">
    <property type="term" value="C:small ribosomal subunit"/>
    <property type="evidence" value="ECO:0007669"/>
    <property type="project" value="TreeGrafter"/>
</dbReference>
<dbReference type="GO" id="GO:0003735">
    <property type="term" value="F:structural constituent of ribosome"/>
    <property type="evidence" value="ECO:0007669"/>
    <property type="project" value="InterPro"/>
</dbReference>
<dbReference type="GO" id="GO:0006412">
    <property type="term" value="P:translation"/>
    <property type="evidence" value="ECO:0007669"/>
    <property type="project" value="UniProtKB-UniRule"/>
</dbReference>
<dbReference type="FunFam" id="3.30.1320.10:FF:000010">
    <property type="entry name" value="30S ribosomal protein S16"/>
    <property type="match status" value="1"/>
</dbReference>
<dbReference type="Gene3D" id="3.30.1320.10">
    <property type="match status" value="1"/>
</dbReference>
<dbReference type="HAMAP" id="MF_00385">
    <property type="entry name" value="Ribosomal_bS16"/>
    <property type="match status" value="1"/>
</dbReference>
<dbReference type="InterPro" id="IPR000307">
    <property type="entry name" value="Ribosomal_bS16"/>
</dbReference>
<dbReference type="InterPro" id="IPR023803">
    <property type="entry name" value="Ribosomal_bS16_dom_sf"/>
</dbReference>
<dbReference type="NCBIfam" id="TIGR00002">
    <property type="entry name" value="S16"/>
    <property type="match status" value="1"/>
</dbReference>
<dbReference type="PANTHER" id="PTHR12919">
    <property type="entry name" value="30S RIBOSOMAL PROTEIN S16"/>
    <property type="match status" value="1"/>
</dbReference>
<dbReference type="PANTHER" id="PTHR12919:SF20">
    <property type="entry name" value="SMALL RIBOSOMAL SUBUNIT PROTEIN BS16M"/>
    <property type="match status" value="1"/>
</dbReference>
<dbReference type="Pfam" id="PF00886">
    <property type="entry name" value="Ribosomal_S16"/>
    <property type="match status" value="1"/>
</dbReference>
<dbReference type="SUPFAM" id="SSF54565">
    <property type="entry name" value="Ribosomal protein S16"/>
    <property type="match status" value="1"/>
</dbReference>